<organism>
    <name type="scientific">Mycolicibacterium gilvum (strain PYR-GCK)</name>
    <name type="common">Mycobacterium gilvum (strain PYR-GCK)</name>
    <dbReference type="NCBI Taxonomy" id="350054"/>
    <lineage>
        <taxon>Bacteria</taxon>
        <taxon>Bacillati</taxon>
        <taxon>Actinomycetota</taxon>
        <taxon>Actinomycetes</taxon>
        <taxon>Mycobacteriales</taxon>
        <taxon>Mycobacteriaceae</taxon>
        <taxon>Mycolicibacterium</taxon>
    </lineage>
</organism>
<keyword id="KW-0227">DNA damage</keyword>
<keyword id="KW-0234">DNA repair</keyword>
<keyword id="KW-0238">DNA-binding</keyword>
<keyword id="KW-0326">Glycosidase</keyword>
<keyword id="KW-0378">Hydrolase</keyword>
<keyword id="KW-0456">Lyase</keyword>
<keyword id="KW-0479">Metal-binding</keyword>
<keyword id="KW-0511">Multifunctional enzyme</keyword>
<keyword id="KW-0862">Zinc</keyword>
<keyword id="KW-0863">Zinc-finger</keyword>
<name>FPG_MYCGI</name>
<feature type="initiator methionine" description="Removed" evidence="1">
    <location>
        <position position="1"/>
    </location>
</feature>
<feature type="chain" id="PRO_1000075703" description="Formamidopyrimidine-DNA glycosylase">
    <location>
        <begin position="2"/>
        <end position="282"/>
    </location>
</feature>
<feature type="zinc finger region" description="FPG-type" evidence="2">
    <location>
        <begin position="244"/>
        <end position="278"/>
    </location>
</feature>
<feature type="active site" description="Schiff-base intermediate with DNA" evidence="2">
    <location>
        <position position="2"/>
    </location>
</feature>
<feature type="active site" description="Proton donor" evidence="2">
    <location>
        <position position="3"/>
    </location>
</feature>
<feature type="active site" description="Proton donor; for beta-elimination activity" evidence="2">
    <location>
        <position position="61"/>
    </location>
</feature>
<feature type="active site" description="Proton donor; for delta-elimination activity" evidence="2">
    <location>
        <position position="268"/>
    </location>
</feature>
<feature type="binding site" evidence="2">
    <location>
        <position position="93"/>
    </location>
    <ligand>
        <name>DNA</name>
        <dbReference type="ChEBI" id="CHEBI:16991"/>
    </ligand>
</feature>
<feature type="binding site" evidence="2">
    <location>
        <position position="112"/>
    </location>
    <ligand>
        <name>DNA</name>
        <dbReference type="ChEBI" id="CHEBI:16991"/>
    </ligand>
</feature>
<feature type="binding site" evidence="2">
    <location>
        <position position="158"/>
    </location>
    <ligand>
        <name>DNA</name>
        <dbReference type="ChEBI" id="CHEBI:16991"/>
    </ligand>
</feature>
<sequence>MPELPEVEVVRRGLAAHVTGRTISAVRVHHPRAVRRHEAGPADLTARLLDSVITGTGRRGKYLWLTLGDGSAVVVHLGMSGQMLLGPVRNENHLRIAVLLDDGTALSFVDQRTFGGWMLADLVTVDGSDVPAPVAHIARDPLDPLFDRAAVVNVLRRKHSEIKRQLLDQTVVSGIGNIYADESLWRAKINGARLASGVSKAKLAELLDAATDVMTDALAQGGTSFDSLYVNVNGESGYFDRSLDAYGREGEPCRRCGAIMRRDKFMNRSSFYCPRCQPRPRV</sequence>
<dbReference type="EC" id="3.2.2.23" evidence="2"/>
<dbReference type="EC" id="4.2.99.18" evidence="2"/>
<dbReference type="EMBL" id="CP000656">
    <property type="protein sequence ID" value="ABP46660.1"/>
    <property type="molecule type" value="Genomic_DNA"/>
</dbReference>
<dbReference type="SMR" id="A4TE57"/>
<dbReference type="STRING" id="350054.Mflv_4191"/>
<dbReference type="KEGG" id="mgi:Mflv_4191"/>
<dbReference type="eggNOG" id="COG0266">
    <property type="taxonomic scope" value="Bacteria"/>
</dbReference>
<dbReference type="HOGENOM" id="CLU_038423_1_2_11"/>
<dbReference type="OrthoDB" id="9800855at2"/>
<dbReference type="GO" id="GO:0034039">
    <property type="term" value="F:8-oxo-7,8-dihydroguanine DNA N-glycosylase activity"/>
    <property type="evidence" value="ECO:0007669"/>
    <property type="project" value="TreeGrafter"/>
</dbReference>
<dbReference type="GO" id="GO:0140078">
    <property type="term" value="F:class I DNA-(apurinic or apyrimidinic site) endonuclease activity"/>
    <property type="evidence" value="ECO:0007669"/>
    <property type="project" value="UniProtKB-EC"/>
</dbReference>
<dbReference type="GO" id="GO:0003684">
    <property type="term" value="F:damaged DNA binding"/>
    <property type="evidence" value="ECO:0007669"/>
    <property type="project" value="InterPro"/>
</dbReference>
<dbReference type="GO" id="GO:0008270">
    <property type="term" value="F:zinc ion binding"/>
    <property type="evidence" value="ECO:0007669"/>
    <property type="project" value="UniProtKB-UniRule"/>
</dbReference>
<dbReference type="GO" id="GO:0006284">
    <property type="term" value="P:base-excision repair"/>
    <property type="evidence" value="ECO:0007669"/>
    <property type="project" value="InterPro"/>
</dbReference>
<dbReference type="CDD" id="cd08966">
    <property type="entry name" value="EcFpg-like_N"/>
    <property type="match status" value="1"/>
</dbReference>
<dbReference type="FunFam" id="1.10.8.50:FF:000003">
    <property type="entry name" value="Formamidopyrimidine-DNA glycosylase"/>
    <property type="match status" value="1"/>
</dbReference>
<dbReference type="FunFam" id="3.20.190.10:FF:000006">
    <property type="entry name" value="Formamidopyrimidine-DNA glycosylase"/>
    <property type="match status" value="1"/>
</dbReference>
<dbReference type="Gene3D" id="1.10.8.50">
    <property type="match status" value="1"/>
</dbReference>
<dbReference type="Gene3D" id="3.20.190.10">
    <property type="entry name" value="MutM-like, N-terminal"/>
    <property type="match status" value="1"/>
</dbReference>
<dbReference type="HAMAP" id="MF_00103">
    <property type="entry name" value="Fapy_DNA_glycosyl"/>
    <property type="match status" value="1"/>
</dbReference>
<dbReference type="InterPro" id="IPR015886">
    <property type="entry name" value="DNA_glyclase/AP_lyase_DNA-bd"/>
</dbReference>
<dbReference type="InterPro" id="IPR015887">
    <property type="entry name" value="DNA_glyclase_Znf_dom_DNA_BS"/>
</dbReference>
<dbReference type="InterPro" id="IPR020629">
    <property type="entry name" value="Formamido-pyr_DNA_Glyclase"/>
</dbReference>
<dbReference type="InterPro" id="IPR012319">
    <property type="entry name" value="FPG_cat"/>
</dbReference>
<dbReference type="InterPro" id="IPR035937">
    <property type="entry name" value="MutM-like_N-ter"/>
</dbReference>
<dbReference type="InterPro" id="IPR010979">
    <property type="entry name" value="Ribosomal_uS13-like_H2TH"/>
</dbReference>
<dbReference type="InterPro" id="IPR000214">
    <property type="entry name" value="Znf_DNA_glyclase/AP_lyase"/>
</dbReference>
<dbReference type="InterPro" id="IPR010663">
    <property type="entry name" value="Znf_FPG/IleRS"/>
</dbReference>
<dbReference type="NCBIfam" id="TIGR00577">
    <property type="entry name" value="fpg"/>
    <property type="match status" value="1"/>
</dbReference>
<dbReference type="NCBIfam" id="NF002211">
    <property type="entry name" value="PRK01103.1"/>
    <property type="match status" value="1"/>
</dbReference>
<dbReference type="PANTHER" id="PTHR22993">
    <property type="entry name" value="FORMAMIDOPYRIMIDINE-DNA GLYCOSYLASE"/>
    <property type="match status" value="1"/>
</dbReference>
<dbReference type="PANTHER" id="PTHR22993:SF9">
    <property type="entry name" value="FORMAMIDOPYRIMIDINE-DNA GLYCOSYLASE"/>
    <property type="match status" value="1"/>
</dbReference>
<dbReference type="Pfam" id="PF01149">
    <property type="entry name" value="Fapy_DNA_glyco"/>
    <property type="match status" value="1"/>
</dbReference>
<dbReference type="Pfam" id="PF06831">
    <property type="entry name" value="H2TH"/>
    <property type="match status" value="1"/>
</dbReference>
<dbReference type="Pfam" id="PF06827">
    <property type="entry name" value="zf-FPG_IleRS"/>
    <property type="match status" value="1"/>
</dbReference>
<dbReference type="SMART" id="SM00898">
    <property type="entry name" value="Fapy_DNA_glyco"/>
    <property type="match status" value="1"/>
</dbReference>
<dbReference type="SMART" id="SM01232">
    <property type="entry name" value="H2TH"/>
    <property type="match status" value="1"/>
</dbReference>
<dbReference type="SUPFAM" id="SSF57716">
    <property type="entry name" value="Glucocorticoid receptor-like (DNA-binding domain)"/>
    <property type="match status" value="1"/>
</dbReference>
<dbReference type="SUPFAM" id="SSF81624">
    <property type="entry name" value="N-terminal domain of MutM-like DNA repair proteins"/>
    <property type="match status" value="1"/>
</dbReference>
<dbReference type="SUPFAM" id="SSF46946">
    <property type="entry name" value="S13-like H2TH domain"/>
    <property type="match status" value="1"/>
</dbReference>
<dbReference type="PROSITE" id="PS51068">
    <property type="entry name" value="FPG_CAT"/>
    <property type="match status" value="1"/>
</dbReference>
<dbReference type="PROSITE" id="PS01242">
    <property type="entry name" value="ZF_FPG_1"/>
    <property type="match status" value="1"/>
</dbReference>
<dbReference type="PROSITE" id="PS51066">
    <property type="entry name" value="ZF_FPG_2"/>
    <property type="match status" value="1"/>
</dbReference>
<gene>
    <name evidence="2" type="primary">mutM</name>
    <name evidence="2" type="synonym">fpg</name>
    <name type="ordered locus">Mflv_4191</name>
</gene>
<evidence type="ECO:0000250" key="1"/>
<evidence type="ECO:0000255" key="2">
    <source>
        <dbReference type="HAMAP-Rule" id="MF_00103"/>
    </source>
</evidence>
<accession>A4TE57</accession>
<protein>
    <recommendedName>
        <fullName evidence="2">Formamidopyrimidine-DNA glycosylase</fullName>
        <shortName evidence="2">Fapy-DNA glycosylase</shortName>
        <ecNumber evidence="2">3.2.2.23</ecNumber>
    </recommendedName>
    <alternativeName>
        <fullName evidence="2">DNA-(apurinic or apyrimidinic site) lyase MutM</fullName>
        <shortName evidence="2">AP lyase MutM</shortName>
        <ecNumber evidence="2">4.2.99.18</ecNumber>
    </alternativeName>
</protein>
<comment type="function">
    <text evidence="2">Involved in base excision repair of DNA damaged by oxidation or by mutagenic agents. Acts as a DNA glycosylase that recognizes and removes damaged bases. Has a preference for oxidized purines, such as 7,8-dihydro-8-oxoguanine (8-oxoG). Has AP (apurinic/apyrimidinic) lyase activity and introduces nicks in the DNA strand. Cleaves the DNA backbone by beta-delta elimination to generate a single-strand break at the site of the removed base with both 3'- and 5'-phosphates.</text>
</comment>
<comment type="catalytic activity">
    <reaction evidence="2">
        <text>Hydrolysis of DNA containing ring-opened 7-methylguanine residues, releasing 2,6-diamino-4-hydroxy-5-(N-methyl)formamidopyrimidine.</text>
        <dbReference type="EC" id="3.2.2.23"/>
    </reaction>
</comment>
<comment type="catalytic activity">
    <reaction evidence="2">
        <text>2'-deoxyribonucleotide-(2'-deoxyribose 5'-phosphate)-2'-deoxyribonucleotide-DNA = a 3'-end 2'-deoxyribonucleotide-(2,3-dehydro-2,3-deoxyribose 5'-phosphate)-DNA + a 5'-end 5'-phospho-2'-deoxyribonucleoside-DNA + H(+)</text>
        <dbReference type="Rhea" id="RHEA:66592"/>
        <dbReference type="Rhea" id="RHEA-COMP:13180"/>
        <dbReference type="Rhea" id="RHEA-COMP:16897"/>
        <dbReference type="Rhea" id="RHEA-COMP:17067"/>
        <dbReference type="ChEBI" id="CHEBI:15378"/>
        <dbReference type="ChEBI" id="CHEBI:136412"/>
        <dbReference type="ChEBI" id="CHEBI:157695"/>
        <dbReference type="ChEBI" id="CHEBI:167181"/>
        <dbReference type="EC" id="4.2.99.18"/>
    </reaction>
</comment>
<comment type="cofactor">
    <cofactor evidence="2">
        <name>Zn(2+)</name>
        <dbReference type="ChEBI" id="CHEBI:29105"/>
    </cofactor>
    <text evidence="2">Binds 1 zinc ion per subunit.</text>
</comment>
<comment type="subunit">
    <text evidence="2">Monomer.</text>
</comment>
<comment type="similarity">
    <text evidence="2">Belongs to the FPG family.</text>
</comment>
<reference key="1">
    <citation type="submission" date="2007-04" db="EMBL/GenBank/DDBJ databases">
        <title>Complete sequence of chromosome of Mycobacterium gilvum PYR-GCK.</title>
        <authorList>
            <consortium name="US DOE Joint Genome Institute"/>
            <person name="Copeland A."/>
            <person name="Lucas S."/>
            <person name="Lapidus A."/>
            <person name="Barry K."/>
            <person name="Detter J.C."/>
            <person name="Glavina del Rio T."/>
            <person name="Hammon N."/>
            <person name="Israni S."/>
            <person name="Dalin E."/>
            <person name="Tice H."/>
            <person name="Pitluck S."/>
            <person name="Chain P."/>
            <person name="Malfatti S."/>
            <person name="Shin M."/>
            <person name="Vergez L."/>
            <person name="Schmutz J."/>
            <person name="Larimer F."/>
            <person name="Land M."/>
            <person name="Hauser L."/>
            <person name="Kyrpides N."/>
            <person name="Mikhailova N."/>
            <person name="Miller C."/>
            <person name="Richardson P."/>
        </authorList>
    </citation>
    <scope>NUCLEOTIDE SEQUENCE [LARGE SCALE GENOMIC DNA]</scope>
    <source>
        <strain>PYR-GCK</strain>
    </source>
</reference>
<proteinExistence type="inferred from homology"/>